<sequence>MGVPIGDLVPRKEIDLENLYGKKIAIDALNAIYQFLSTIRQRDGTPLMDSKGRITSHLSGLFYRTINLMEAGIKPAYVFDGKPPEFKRKELEKRREAREEAELKWKEALAKGNLEEARKYAQRATKVNEMLIEDAKKLLQLMGIPIIQAPSEGEAQAAYMASKGDVYASASQDYDSLLFGAPRLIRNLTITGKRKMPGKDVYVEIKPELVVLDEVLKELKITREKLIELAILVGTDYNPGGVKGIGPKKALEIVRYSRDPLAKFQRQSDVDLYAIKEFFLNPPVTNEYSLSWKEPDEEGILKFLCDEHNFSEERVKNGIERLKKAIKAGRQSTLESWFVKKKP</sequence>
<keyword id="KW-0002">3D-structure</keyword>
<keyword id="KW-0227">DNA damage</keyword>
<keyword id="KW-0234">DNA repair</keyword>
<keyword id="KW-0235">DNA replication</keyword>
<keyword id="KW-0255">Endonuclease</keyword>
<keyword id="KW-0269">Exonuclease</keyword>
<keyword id="KW-0378">Hydrolase</keyword>
<keyword id="KW-0460">Magnesium</keyword>
<keyword id="KW-0479">Metal-binding</keyword>
<keyword id="KW-0540">Nuclease</keyword>
<name>FEN_PYRHO</name>
<accession>O50123</accession>
<comment type="function">
    <text evidence="1">Structure-specific nuclease with 5'-flap endonuclease and 5'-3' exonuclease activities involved in DNA replication and repair. During DNA replication, cleaves the 5'-overhanging flap structure that is generated by displacement synthesis when DNA polymerase encounters the 5'-end of a downstream Okazaki fragment. Binds the unpaired 3'-DNA end and kinks the DNA to facilitate 5' cleavage specificity. Cleaves one nucleotide into the double-stranded DNA from the junction in flap DNA, leaving a nick for ligation. Also involved in the base excision repair (BER) pathway. Acts as a genome stabilization factor that prevents flaps from equilibrating into structures that lead to duplications and deletions. Also possesses 5'-3' exonuclease activity on nicked or gapped double-stranded DNA (By similarity).</text>
</comment>
<comment type="cofactor">
    <cofactor evidence="2">
        <name>Mg(2+)</name>
        <dbReference type="ChEBI" id="CHEBI:18420"/>
    </cofactor>
    <text evidence="2">Binds 2 magnesium ions per subunit. They probably participate in the reaction catalyzed by the enzyme. May bind an additional third magnesium ion after substrate binding.</text>
</comment>
<comment type="subunit">
    <text evidence="2">Interacts with PCNA. PCNA stimulates the nuclease activity without altering cleavage specificity.</text>
</comment>
<comment type="similarity">
    <text evidence="2">Belongs to the XPG/RAD2 endonuclease family. FEN1 subfamily.</text>
</comment>
<evidence type="ECO:0000250" key="1"/>
<evidence type="ECO:0000255" key="2">
    <source>
        <dbReference type="HAMAP-Rule" id="MF_00614"/>
    </source>
</evidence>
<evidence type="ECO:0007829" key="3">
    <source>
        <dbReference type="PDB" id="1MC8"/>
    </source>
</evidence>
<protein>
    <recommendedName>
        <fullName evidence="2">Flap endonuclease 1</fullName>
        <shortName evidence="2">FEN-1</shortName>
        <ecNumber evidence="2">3.1.-.-</ecNumber>
    </recommendedName>
    <alternativeName>
        <fullName evidence="2">Flap structure-specific endonuclease 1</fullName>
    </alternativeName>
</protein>
<organism>
    <name type="scientific">Pyrococcus horikoshii (strain ATCC 700860 / DSM 12428 / JCM 9974 / NBRC 100139 / OT-3)</name>
    <dbReference type="NCBI Taxonomy" id="70601"/>
    <lineage>
        <taxon>Archaea</taxon>
        <taxon>Methanobacteriati</taxon>
        <taxon>Methanobacteriota</taxon>
        <taxon>Thermococci</taxon>
        <taxon>Thermococcales</taxon>
        <taxon>Thermococcaceae</taxon>
        <taxon>Pyrococcus</taxon>
    </lineage>
</organism>
<feature type="chain" id="PRO_0000154062" description="Flap endonuclease 1">
    <location>
        <begin position="1"/>
        <end position="343"/>
    </location>
</feature>
<feature type="region of interest" description="N-domain">
    <location>
        <begin position="1"/>
        <end position="98"/>
    </location>
</feature>
<feature type="region of interest" description="I-domain">
    <location>
        <begin position="116"/>
        <end position="258"/>
    </location>
</feature>
<feature type="region of interest" description="Interaction with PCNA" evidence="2">
    <location>
        <begin position="330"/>
        <end position="338"/>
    </location>
</feature>
<feature type="binding site" evidence="2">
    <location>
        <position position="27"/>
    </location>
    <ligand>
        <name>Mg(2+)</name>
        <dbReference type="ChEBI" id="CHEBI:18420"/>
        <label>1</label>
    </ligand>
</feature>
<feature type="binding site" evidence="2">
    <location>
        <position position="80"/>
    </location>
    <ligand>
        <name>Mg(2+)</name>
        <dbReference type="ChEBI" id="CHEBI:18420"/>
        <label>1</label>
    </ligand>
</feature>
<feature type="binding site" evidence="2">
    <location>
        <position position="152"/>
    </location>
    <ligand>
        <name>Mg(2+)</name>
        <dbReference type="ChEBI" id="CHEBI:18420"/>
        <label>1</label>
    </ligand>
</feature>
<feature type="binding site" evidence="2">
    <location>
        <position position="154"/>
    </location>
    <ligand>
        <name>Mg(2+)</name>
        <dbReference type="ChEBI" id="CHEBI:18420"/>
        <label>1</label>
    </ligand>
</feature>
<feature type="binding site" evidence="2">
    <location>
        <position position="173"/>
    </location>
    <ligand>
        <name>Mg(2+)</name>
        <dbReference type="ChEBI" id="CHEBI:18420"/>
        <label>2</label>
    </ligand>
</feature>
<feature type="binding site" evidence="2">
    <location>
        <position position="175"/>
    </location>
    <ligand>
        <name>Mg(2+)</name>
        <dbReference type="ChEBI" id="CHEBI:18420"/>
        <label>2</label>
    </ligand>
</feature>
<feature type="binding site" evidence="2">
    <location>
        <position position="236"/>
    </location>
    <ligand>
        <name>Mg(2+)</name>
        <dbReference type="ChEBI" id="CHEBI:18420"/>
        <label>2</label>
    </ligand>
</feature>
<feature type="helix" evidence="3">
    <location>
        <begin position="5"/>
        <end position="8"/>
    </location>
</feature>
<feature type="turn" evidence="3">
    <location>
        <begin position="16"/>
        <end position="21"/>
    </location>
</feature>
<feature type="strand" evidence="3">
    <location>
        <begin position="23"/>
        <end position="27"/>
    </location>
</feature>
<feature type="helix" evidence="3">
    <location>
        <begin position="28"/>
        <end position="38"/>
    </location>
</feature>
<feature type="strand" evidence="3">
    <location>
        <begin position="39"/>
        <end position="41"/>
    </location>
</feature>
<feature type="turn" evidence="3">
    <location>
        <begin position="42"/>
        <end position="44"/>
    </location>
</feature>
<feature type="helix" evidence="3">
    <location>
        <begin position="56"/>
        <end position="71"/>
    </location>
</feature>
<feature type="strand" evidence="3">
    <location>
        <begin position="74"/>
        <end position="79"/>
    </location>
</feature>
<feature type="strand" evidence="3">
    <location>
        <begin position="90"/>
        <end position="93"/>
    </location>
</feature>
<feature type="strand" evidence="3">
    <location>
        <begin position="102"/>
        <end position="107"/>
    </location>
</feature>
<feature type="helix" evidence="3">
    <location>
        <begin position="109"/>
        <end position="111"/>
    </location>
</feature>
<feature type="turn" evidence="3">
    <location>
        <begin position="112"/>
        <end position="114"/>
    </location>
</feature>
<feature type="turn" evidence="3">
    <location>
        <begin position="117"/>
        <end position="124"/>
    </location>
</feature>
<feature type="helix" evidence="3">
    <location>
        <begin position="129"/>
        <end position="142"/>
    </location>
</feature>
<feature type="helix" evidence="3">
    <location>
        <begin position="153"/>
        <end position="161"/>
    </location>
</feature>
<feature type="turn" evidence="3">
    <location>
        <begin position="162"/>
        <end position="164"/>
    </location>
</feature>
<feature type="helix" evidence="3">
    <location>
        <begin position="175"/>
        <end position="178"/>
    </location>
</feature>
<feature type="strand" evidence="3">
    <location>
        <begin position="182"/>
        <end position="186"/>
    </location>
</feature>
<feature type="helix" evidence="3">
    <location>
        <begin position="188"/>
        <end position="190"/>
    </location>
</feature>
<feature type="strand" evidence="3">
    <location>
        <begin position="208"/>
        <end position="211"/>
    </location>
</feature>
<feature type="helix" evidence="3">
    <location>
        <begin position="212"/>
        <end position="217"/>
    </location>
</feature>
<feature type="turn" evidence="3">
    <location>
        <begin position="218"/>
        <end position="220"/>
    </location>
</feature>
<feature type="helix" evidence="3">
    <location>
        <begin position="223"/>
        <end position="233"/>
    </location>
</feature>
<feature type="helix" evidence="3">
    <location>
        <begin position="247"/>
        <end position="255"/>
    </location>
</feature>
<feature type="strand" evidence="3">
    <location>
        <begin position="256"/>
        <end position="259"/>
    </location>
</feature>
<feature type="helix" evidence="3">
    <location>
        <begin position="261"/>
        <end position="263"/>
    </location>
</feature>
<feature type="turn" evidence="3">
    <location>
        <begin position="265"/>
        <end position="268"/>
    </location>
</feature>
<feature type="helix" evidence="3">
    <location>
        <begin position="273"/>
        <end position="280"/>
    </location>
</feature>
<feature type="helix" evidence="3">
    <location>
        <begin position="297"/>
        <end position="304"/>
    </location>
</feature>
<feature type="turn" evidence="3">
    <location>
        <begin position="305"/>
        <end position="308"/>
    </location>
</feature>
<feature type="helix" evidence="3">
    <location>
        <begin position="312"/>
        <end position="327"/>
    </location>
</feature>
<reference key="1">
    <citation type="journal article" date="1998" name="DNA Res.">
        <title>Complete sequence and gene organization of the genome of a hyper-thermophilic archaebacterium, Pyrococcus horikoshii OT3.</title>
        <authorList>
            <person name="Kawarabayasi Y."/>
            <person name="Sawada M."/>
            <person name="Horikawa H."/>
            <person name="Haikawa Y."/>
            <person name="Hino Y."/>
            <person name="Yamamoto S."/>
            <person name="Sekine M."/>
            <person name="Baba S."/>
            <person name="Kosugi H."/>
            <person name="Hosoyama A."/>
            <person name="Nagai Y."/>
            <person name="Sakai M."/>
            <person name="Ogura K."/>
            <person name="Otsuka R."/>
            <person name="Nakazawa H."/>
            <person name="Takamiya M."/>
            <person name="Ohfuku Y."/>
            <person name="Funahashi T."/>
            <person name="Tanaka T."/>
            <person name="Kudoh Y."/>
            <person name="Yamazaki J."/>
            <person name="Kushida N."/>
            <person name="Oguchi A."/>
            <person name="Aoki K."/>
            <person name="Yoshizawa T."/>
            <person name="Nakamura Y."/>
            <person name="Robb F.T."/>
            <person name="Horikoshi K."/>
            <person name="Masuchi Y."/>
            <person name="Shizuya H."/>
            <person name="Kikuchi H."/>
        </authorList>
    </citation>
    <scope>NUCLEOTIDE SEQUENCE [LARGE SCALE GENOMIC DNA]</scope>
    <source>
        <strain>ATCC 700860 / DSM 12428 / JCM 9974 / NBRC 100139 / OT-3</strain>
    </source>
</reference>
<reference key="2">
    <citation type="journal article" date="2002" name="J. Biol. Chem.">
        <title>Molecular structure and novel DNA binding sites located in loops of flap endonuclease-1 from Pyrococcus horikoshii.</title>
        <authorList>
            <person name="Matsui E."/>
            <person name="Musti K.V."/>
            <person name="Abe J."/>
            <person name="Yamasaki K."/>
            <person name="Matsui I."/>
            <person name="Harata K."/>
        </authorList>
    </citation>
    <scope>X-RAY CRYSTALLOGRAPHY (3.1 ANGSTROMS)</scope>
</reference>
<proteinExistence type="evidence at protein level"/>
<gene>
    <name evidence="2" type="primary">fen</name>
    <name type="ordered locus">PH1415</name>
</gene>
<dbReference type="EC" id="3.1.-.-" evidence="2"/>
<dbReference type="EMBL" id="BA000001">
    <property type="protein sequence ID" value="BAA30521.1"/>
    <property type="molecule type" value="Genomic_DNA"/>
</dbReference>
<dbReference type="PIR" id="A71015">
    <property type="entry name" value="A71015"/>
</dbReference>
<dbReference type="RefSeq" id="WP_010885498.1">
    <property type="nucleotide sequence ID" value="NC_000961.1"/>
</dbReference>
<dbReference type="PDB" id="1MC8">
    <property type="method" value="X-ray"/>
    <property type="resolution" value="3.10 A"/>
    <property type="chains" value="A/B=1-343"/>
</dbReference>
<dbReference type="PDBsum" id="1MC8"/>
<dbReference type="SMR" id="O50123"/>
<dbReference type="STRING" id="70601.gene:9378391"/>
<dbReference type="EnsemblBacteria" id="BAA30521">
    <property type="protein sequence ID" value="BAA30521"/>
    <property type="gene ID" value="BAA30521"/>
</dbReference>
<dbReference type="GeneID" id="1443736"/>
<dbReference type="KEGG" id="pho:PH1415"/>
<dbReference type="eggNOG" id="arCOG04050">
    <property type="taxonomic scope" value="Archaea"/>
</dbReference>
<dbReference type="OrthoDB" id="9593at2157"/>
<dbReference type="BRENDA" id="3.1.99.B1">
    <property type="organism ID" value="5244"/>
</dbReference>
<dbReference type="EvolutionaryTrace" id="O50123"/>
<dbReference type="Proteomes" id="UP000000752">
    <property type="component" value="Chromosome"/>
</dbReference>
<dbReference type="GO" id="GO:0008409">
    <property type="term" value="F:5'-3' exonuclease activity"/>
    <property type="evidence" value="ECO:0007669"/>
    <property type="project" value="UniProtKB-UniRule"/>
</dbReference>
<dbReference type="GO" id="GO:0017108">
    <property type="term" value="F:5'-flap endonuclease activity"/>
    <property type="evidence" value="ECO:0007669"/>
    <property type="project" value="UniProtKB-UniRule"/>
</dbReference>
<dbReference type="GO" id="GO:0003677">
    <property type="term" value="F:DNA binding"/>
    <property type="evidence" value="ECO:0007669"/>
    <property type="project" value="UniProtKB-UniRule"/>
</dbReference>
<dbReference type="GO" id="GO:0000287">
    <property type="term" value="F:magnesium ion binding"/>
    <property type="evidence" value="ECO:0007669"/>
    <property type="project" value="UniProtKB-UniRule"/>
</dbReference>
<dbReference type="GO" id="GO:0006281">
    <property type="term" value="P:DNA repair"/>
    <property type="evidence" value="ECO:0007669"/>
    <property type="project" value="UniProtKB-UniRule"/>
</dbReference>
<dbReference type="GO" id="GO:0043137">
    <property type="term" value="P:DNA replication, removal of RNA primer"/>
    <property type="evidence" value="ECO:0007669"/>
    <property type="project" value="UniProtKB-UniRule"/>
</dbReference>
<dbReference type="CDD" id="cd09903">
    <property type="entry name" value="H3TH_FEN1-Arc"/>
    <property type="match status" value="1"/>
</dbReference>
<dbReference type="CDD" id="cd09867">
    <property type="entry name" value="PIN_FEN1"/>
    <property type="match status" value="1"/>
</dbReference>
<dbReference type="FunFam" id="1.10.150.20:FF:000087">
    <property type="entry name" value="Flap endonuclease 1"/>
    <property type="match status" value="1"/>
</dbReference>
<dbReference type="FunFam" id="3.40.50.1010:FF:000016">
    <property type="entry name" value="Flap endonuclease 1"/>
    <property type="match status" value="1"/>
</dbReference>
<dbReference type="Gene3D" id="1.10.150.20">
    <property type="entry name" value="5' to 3' exonuclease, C-terminal subdomain"/>
    <property type="match status" value="1"/>
</dbReference>
<dbReference type="Gene3D" id="3.40.50.1010">
    <property type="entry name" value="5'-nuclease"/>
    <property type="match status" value="1"/>
</dbReference>
<dbReference type="HAMAP" id="MF_00614">
    <property type="entry name" value="Fen"/>
    <property type="match status" value="1"/>
</dbReference>
<dbReference type="InterPro" id="IPR036279">
    <property type="entry name" value="5-3_exonuclease_C_sf"/>
</dbReference>
<dbReference type="InterPro" id="IPR023426">
    <property type="entry name" value="Flap_endonuc"/>
</dbReference>
<dbReference type="InterPro" id="IPR019973">
    <property type="entry name" value="Flap_endonuc_arc"/>
</dbReference>
<dbReference type="InterPro" id="IPR008918">
    <property type="entry name" value="HhH2"/>
</dbReference>
<dbReference type="InterPro" id="IPR029060">
    <property type="entry name" value="PIN-like_dom_sf"/>
</dbReference>
<dbReference type="InterPro" id="IPR006086">
    <property type="entry name" value="XPG-I_dom"/>
</dbReference>
<dbReference type="InterPro" id="IPR006084">
    <property type="entry name" value="XPG/Rad2"/>
</dbReference>
<dbReference type="InterPro" id="IPR019974">
    <property type="entry name" value="XPG_CS"/>
</dbReference>
<dbReference type="InterPro" id="IPR006085">
    <property type="entry name" value="XPG_DNA_repair_N"/>
</dbReference>
<dbReference type="NCBIfam" id="TIGR03674">
    <property type="entry name" value="fen_arch"/>
    <property type="match status" value="1"/>
</dbReference>
<dbReference type="PANTHER" id="PTHR11081:SF9">
    <property type="entry name" value="FLAP ENDONUCLEASE 1"/>
    <property type="match status" value="1"/>
</dbReference>
<dbReference type="PANTHER" id="PTHR11081">
    <property type="entry name" value="FLAP ENDONUCLEASE FAMILY MEMBER"/>
    <property type="match status" value="1"/>
</dbReference>
<dbReference type="Pfam" id="PF00867">
    <property type="entry name" value="XPG_I"/>
    <property type="match status" value="1"/>
</dbReference>
<dbReference type="Pfam" id="PF00752">
    <property type="entry name" value="XPG_N"/>
    <property type="match status" value="1"/>
</dbReference>
<dbReference type="PRINTS" id="PR00853">
    <property type="entry name" value="XPGRADSUPER"/>
</dbReference>
<dbReference type="SMART" id="SM00279">
    <property type="entry name" value="HhH2"/>
    <property type="match status" value="1"/>
</dbReference>
<dbReference type="SMART" id="SM00484">
    <property type="entry name" value="XPGI"/>
    <property type="match status" value="1"/>
</dbReference>
<dbReference type="SMART" id="SM00485">
    <property type="entry name" value="XPGN"/>
    <property type="match status" value="1"/>
</dbReference>
<dbReference type="SUPFAM" id="SSF47807">
    <property type="entry name" value="5' to 3' exonuclease, C-terminal subdomain"/>
    <property type="match status" value="1"/>
</dbReference>
<dbReference type="SUPFAM" id="SSF88723">
    <property type="entry name" value="PIN domain-like"/>
    <property type="match status" value="1"/>
</dbReference>
<dbReference type="PROSITE" id="PS00841">
    <property type="entry name" value="XPG_1"/>
    <property type="match status" value="1"/>
</dbReference>